<evidence type="ECO:0000250" key="1"/>
<evidence type="ECO:0000250" key="2">
    <source>
        <dbReference type="UniProtKB" id="E4QP00"/>
    </source>
</evidence>
<evidence type="ECO:0000255" key="3"/>
<evidence type="ECO:0000269" key="4">
    <source>
    </source>
</evidence>
<evidence type="ECO:0000269" key="5">
    <source>
    </source>
</evidence>
<evidence type="ECO:0000305" key="6"/>
<comment type="function">
    <text evidence="4 5">Oxidoreductase involved in biosynthesis of 3-hydroxyretinal, a chromophore for rhodopsin Rh1. Not responsible for the initial hydroxylation of the retinal ring but rather acts in a subsequent step in chromophore production. May catalyze the conversion of (3R)-3-hydroxyretinol to the 3S enantiomer.</text>
</comment>
<comment type="cofactor">
    <cofactor evidence="1">
        <name>FAD</name>
        <dbReference type="ChEBI" id="CHEBI:57692"/>
    </cofactor>
</comment>
<comment type="subcellular location">
    <subcellularLocation>
        <location evidence="6">Secreted</location>
    </subcellularLocation>
</comment>
<comment type="similarity">
    <text evidence="6">Belongs to the GMC oxidoreductase family.</text>
</comment>
<comment type="sequence caution" evidence="6">
    <conflict type="erroneous gene model prediction">
        <sequence resource="EMBL-CDS" id="AAF54634"/>
    </conflict>
</comment>
<keyword id="KW-0274">FAD</keyword>
<keyword id="KW-0285">Flavoprotein</keyword>
<keyword id="KW-0325">Glycoprotein</keyword>
<keyword id="KW-0560">Oxidoreductase</keyword>
<keyword id="KW-1185">Reference proteome</keyword>
<keyword id="KW-0964">Secreted</keyword>
<keyword id="KW-0716">Sensory transduction</keyword>
<keyword id="KW-0732">Signal</keyword>
<keyword id="KW-0844">Vision</keyword>
<dbReference type="EC" id="1.-.-.-"/>
<dbReference type="EMBL" id="AE014297">
    <property type="protein sequence ID" value="AAF54634.1"/>
    <property type="status" value="ALT_SEQ"/>
    <property type="molecule type" value="Genomic_DNA"/>
</dbReference>
<dbReference type="EMBL" id="AY118818">
    <property type="protein sequence ID" value="AAM50678.1"/>
    <property type="molecule type" value="mRNA"/>
</dbReference>
<dbReference type="RefSeq" id="NP_001247047.1">
    <property type="nucleotide sequence ID" value="NM_001260118.1"/>
</dbReference>
<dbReference type="RefSeq" id="NP_650070.1">
    <property type="nucleotide sequence ID" value="NM_141813.2"/>
</dbReference>
<dbReference type="SMR" id="Q9VGP2"/>
<dbReference type="IntAct" id="Q9VGP2">
    <property type="interactions" value="1"/>
</dbReference>
<dbReference type="STRING" id="7227.FBpp0081880"/>
<dbReference type="GlyCosmos" id="Q9VGP2">
    <property type="glycosylation" value="4 sites, No reported glycans"/>
</dbReference>
<dbReference type="GlyGen" id="Q9VGP2">
    <property type="glycosylation" value="4 sites"/>
</dbReference>
<dbReference type="PaxDb" id="7227-FBpp0081880"/>
<dbReference type="EnsemblMetazoa" id="FBtr0301146">
    <property type="protein sequence ID" value="FBpp0290369"/>
    <property type="gene ID" value="FBgn0037896"/>
</dbReference>
<dbReference type="GeneID" id="41369"/>
<dbReference type="KEGG" id="dme:Dmel_CG6728"/>
<dbReference type="UCSC" id="CG6728-RA">
    <property type="organism name" value="d. melanogaster"/>
</dbReference>
<dbReference type="AGR" id="FB:FBgn0037896"/>
<dbReference type="CTD" id="41369"/>
<dbReference type="FlyBase" id="FBgn0037896">
    <property type="gene designation" value="ninaG"/>
</dbReference>
<dbReference type="VEuPathDB" id="VectorBase:FBgn0037896"/>
<dbReference type="eggNOG" id="KOG1238">
    <property type="taxonomic scope" value="Eukaryota"/>
</dbReference>
<dbReference type="GeneTree" id="ENSGT00530000063260"/>
<dbReference type="InParanoid" id="Q9VGP2"/>
<dbReference type="OrthoDB" id="269227at2759"/>
<dbReference type="PhylomeDB" id="Q9VGP2"/>
<dbReference type="BioCyc" id="MetaCyc:MONOMER-17371"/>
<dbReference type="BioGRID-ORCS" id="41369">
    <property type="hits" value="0 hits in 1 CRISPR screen"/>
</dbReference>
<dbReference type="GenomeRNAi" id="41369"/>
<dbReference type="PRO" id="PR:Q9VGP2"/>
<dbReference type="Proteomes" id="UP000000803">
    <property type="component" value="Chromosome 3R"/>
</dbReference>
<dbReference type="Bgee" id="FBgn0037896">
    <property type="expression patterns" value="Expressed in outer photoreceptor cell (Drosophila) in insect head and 4 other cell types or tissues"/>
</dbReference>
<dbReference type="ExpressionAtlas" id="Q9VGP2">
    <property type="expression patterns" value="baseline and differential"/>
</dbReference>
<dbReference type="GO" id="GO:0005576">
    <property type="term" value="C:extracellular region"/>
    <property type="evidence" value="ECO:0007669"/>
    <property type="project" value="UniProtKB-SubCell"/>
</dbReference>
<dbReference type="GO" id="GO:0050660">
    <property type="term" value="F:flavin adenine dinucleotide binding"/>
    <property type="evidence" value="ECO:0007669"/>
    <property type="project" value="InterPro"/>
</dbReference>
<dbReference type="GO" id="GO:0016491">
    <property type="term" value="F:oxidoreductase activity"/>
    <property type="evidence" value="ECO:0000315"/>
    <property type="project" value="UniProtKB"/>
</dbReference>
<dbReference type="GO" id="GO:0016614">
    <property type="term" value="F:oxidoreductase activity, acting on CH-OH group of donors"/>
    <property type="evidence" value="ECO:0007669"/>
    <property type="project" value="InterPro"/>
</dbReference>
<dbReference type="GO" id="GO:1990146">
    <property type="term" value="P:protein localization to rhabdomere"/>
    <property type="evidence" value="ECO:0000315"/>
    <property type="project" value="UniProtKB"/>
</dbReference>
<dbReference type="GO" id="GO:0001523">
    <property type="term" value="P:retinoid metabolic process"/>
    <property type="evidence" value="ECO:0000315"/>
    <property type="project" value="UniProtKB"/>
</dbReference>
<dbReference type="GO" id="GO:0061541">
    <property type="term" value="P:rhabdomere morphogenesis"/>
    <property type="evidence" value="ECO:0000315"/>
    <property type="project" value="UniProtKB"/>
</dbReference>
<dbReference type="GO" id="GO:0046154">
    <property type="term" value="P:rhodopsin metabolic process"/>
    <property type="evidence" value="ECO:0000315"/>
    <property type="project" value="UniProtKB"/>
</dbReference>
<dbReference type="GO" id="GO:0007601">
    <property type="term" value="P:visual perception"/>
    <property type="evidence" value="ECO:0000315"/>
    <property type="project" value="UniProtKB"/>
</dbReference>
<dbReference type="Gene3D" id="3.50.50.60">
    <property type="entry name" value="FAD/NAD(P)-binding domain"/>
    <property type="match status" value="1"/>
</dbReference>
<dbReference type="Gene3D" id="3.30.560.10">
    <property type="entry name" value="Glucose Oxidase, domain 3"/>
    <property type="match status" value="1"/>
</dbReference>
<dbReference type="InterPro" id="IPR036188">
    <property type="entry name" value="FAD/NAD-bd_sf"/>
</dbReference>
<dbReference type="InterPro" id="IPR012132">
    <property type="entry name" value="GMC_OxRdtase"/>
</dbReference>
<dbReference type="InterPro" id="IPR000172">
    <property type="entry name" value="GMC_OxRdtase_N"/>
</dbReference>
<dbReference type="InterPro" id="IPR007867">
    <property type="entry name" value="GMC_OxRtase_C"/>
</dbReference>
<dbReference type="PANTHER" id="PTHR11552">
    <property type="entry name" value="GLUCOSE-METHANOL-CHOLINE GMC OXIDOREDUCTASE"/>
    <property type="match status" value="1"/>
</dbReference>
<dbReference type="PANTHER" id="PTHR11552:SF188">
    <property type="entry name" value="NEITHER INACTIVATION NOR AFTERPOTENTIAL PROTEIN G"/>
    <property type="match status" value="1"/>
</dbReference>
<dbReference type="Pfam" id="PF05199">
    <property type="entry name" value="GMC_oxred_C"/>
    <property type="match status" value="1"/>
</dbReference>
<dbReference type="Pfam" id="PF00732">
    <property type="entry name" value="GMC_oxred_N"/>
    <property type="match status" value="1"/>
</dbReference>
<dbReference type="PIRSF" id="PIRSF000137">
    <property type="entry name" value="Alcohol_oxidase"/>
    <property type="match status" value="1"/>
</dbReference>
<dbReference type="SUPFAM" id="SSF54373">
    <property type="entry name" value="FAD-linked reductases, C-terminal domain"/>
    <property type="match status" value="1"/>
</dbReference>
<dbReference type="SUPFAM" id="SSF51905">
    <property type="entry name" value="FAD/NAD(P)-binding domain"/>
    <property type="match status" value="1"/>
</dbReference>
<reference key="1">
    <citation type="journal article" date="2000" name="Science">
        <title>The genome sequence of Drosophila melanogaster.</title>
        <authorList>
            <person name="Adams M.D."/>
            <person name="Celniker S.E."/>
            <person name="Holt R.A."/>
            <person name="Evans C.A."/>
            <person name="Gocayne J.D."/>
            <person name="Amanatides P.G."/>
            <person name="Scherer S.E."/>
            <person name="Li P.W."/>
            <person name="Hoskins R.A."/>
            <person name="Galle R.F."/>
            <person name="George R.A."/>
            <person name="Lewis S.E."/>
            <person name="Richards S."/>
            <person name="Ashburner M."/>
            <person name="Henderson S.N."/>
            <person name="Sutton G.G."/>
            <person name="Wortman J.R."/>
            <person name="Yandell M.D."/>
            <person name="Zhang Q."/>
            <person name="Chen L.X."/>
            <person name="Brandon R.C."/>
            <person name="Rogers Y.-H.C."/>
            <person name="Blazej R.G."/>
            <person name="Champe M."/>
            <person name="Pfeiffer B.D."/>
            <person name="Wan K.H."/>
            <person name="Doyle C."/>
            <person name="Baxter E.G."/>
            <person name="Helt G."/>
            <person name="Nelson C.R."/>
            <person name="Miklos G.L.G."/>
            <person name="Abril J.F."/>
            <person name="Agbayani A."/>
            <person name="An H.-J."/>
            <person name="Andrews-Pfannkoch C."/>
            <person name="Baldwin D."/>
            <person name="Ballew R.M."/>
            <person name="Basu A."/>
            <person name="Baxendale J."/>
            <person name="Bayraktaroglu L."/>
            <person name="Beasley E.M."/>
            <person name="Beeson K.Y."/>
            <person name="Benos P.V."/>
            <person name="Berman B.P."/>
            <person name="Bhandari D."/>
            <person name="Bolshakov S."/>
            <person name="Borkova D."/>
            <person name="Botchan M.R."/>
            <person name="Bouck J."/>
            <person name="Brokstein P."/>
            <person name="Brottier P."/>
            <person name="Burtis K.C."/>
            <person name="Busam D.A."/>
            <person name="Butler H."/>
            <person name="Cadieu E."/>
            <person name="Center A."/>
            <person name="Chandra I."/>
            <person name="Cherry J.M."/>
            <person name="Cawley S."/>
            <person name="Dahlke C."/>
            <person name="Davenport L.B."/>
            <person name="Davies P."/>
            <person name="de Pablos B."/>
            <person name="Delcher A."/>
            <person name="Deng Z."/>
            <person name="Mays A.D."/>
            <person name="Dew I."/>
            <person name="Dietz S.M."/>
            <person name="Dodson K."/>
            <person name="Doup L.E."/>
            <person name="Downes M."/>
            <person name="Dugan-Rocha S."/>
            <person name="Dunkov B.C."/>
            <person name="Dunn P."/>
            <person name="Durbin K.J."/>
            <person name="Evangelista C.C."/>
            <person name="Ferraz C."/>
            <person name="Ferriera S."/>
            <person name="Fleischmann W."/>
            <person name="Fosler C."/>
            <person name="Gabrielian A.E."/>
            <person name="Garg N.S."/>
            <person name="Gelbart W.M."/>
            <person name="Glasser K."/>
            <person name="Glodek A."/>
            <person name="Gong F."/>
            <person name="Gorrell J.H."/>
            <person name="Gu Z."/>
            <person name="Guan P."/>
            <person name="Harris M."/>
            <person name="Harris N.L."/>
            <person name="Harvey D.A."/>
            <person name="Heiman T.J."/>
            <person name="Hernandez J.R."/>
            <person name="Houck J."/>
            <person name="Hostin D."/>
            <person name="Houston K.A."/>
            <person name="Howland T.J."/>
            <person name="Wei M.-H."/>
            <person name="Ibegwam C."/>
            <person name="Jalali M."/>
            <person name="Kalush F."/>
            <person name="Karpen G.H."/>
            <person name="Ke Z."/>
            <person name="Kennison J.A."/>
            <person name="Ketchum K.A."/>
            <person name="Kimmel B.E."/>
            <person name="Kodira C.D."/>
            <person name="Kraft C.L."/>
            <person name="Kravitz S."/>
            <person name="Kulp D."/>
            <person name="Lai Z."/>
            <person name="Lasko P."/>
            <person name="Lei Y."/>
            <person name="Levitsky A.A."/>
            <person name="Li J.H."/>
            <person name="Li Z."/>
            <person name="Liang Y."/>
            <person name="Lin X."/>
            <person name="Liu X."/>
            <person name="Mattei B."/>
            <person name="McIntosh T.C."/>
            <person name="McLeod M.P."/>
            <person name="McPherson D."/>
            <person name="Merkulov G."/>
            <person name="Milshina N.V."/>
            <person name="Mobarry C."/>
            <person name="Morris J."/>
            <person name="Moshrefi A."/>
            <person name="Mount S.M."/>
            <person name="Moy M."/>
            <person name="Murphy B."/>
            <person name="Murphy L."/>
            <person name="Muzny D.M."/>
            <person name="Nelson D.L."/>
            <person name="Nelson D.R."/>
            <person name="Nelson K.A."/>
            <person name="Nixon K."/>
            <person name="Nusskern D.R."/>
            <person name="Pacleb J.M."/>
            <person name="Palazzolo M."/>
            <person name="Pittman G.S."/>
            <person name="Pan S."/>
            <person name="Pollard J."/>
            <person name="Puri V."/>
            <person name="Reese M.G."/>
            <person name="Reinert K."/>
            <person name="Remington K."/>
            <person name="Saunders R.D.C."/>
            <person name="Scheeler F."/>
            <person name="Shen H."/>
            <person name="Shue B.C."/>
            <person name="Siden-Kiamos I."/>
            <person name="Simpson M."/>
            <person name="Skupski M.P."/>
            <person name="Smith T.J."/>
            <person name="Spier E."/>
            <person name="Spradling A.C."/>
            <person name="Stapleton M."/>
            <person name="Strong R."/>
            <person name="Sun E."/>
            <person name="Svirskas R."/>
            <person name="Tector C."/>
            <person name="Turner R."/>
            <person name="Venter E."/>
            <person name="Wang A.H."/>
            <person name="Wang X."/>
            <person name="Wang Z.-Y."/>
            <person name="Wassarman D.A."/>
            <person name="Weinstock G.M."/>
            <person name="Weissenbach J."/>
            <person name="Williams S.M."/>
            <person name="Woodage T."/>
            <person name="Worley K.C."/>
            <person name="Wu D."/>
            <person name="Yang S."/>
            <person name="Yao Q.A."/>
            <person name="Ye J."/>
            <person name="Yeh R.-F."/>
            <person name="Zaveri J.S."/>
            <person name="Zhan M."/>
            <person name="Zhang G."/>
            <person name="Zhao Q."/>
            <person name="Zheng L."/>
            <person name="Zheng X.H."/>
            <person name="Zhong F.N."/>
            <person name="Zhong W."/>
            <person name="Zhou X."/>
            <person name="Zhu S.C."/>
            <person name="Zhu X."/>
            <person name="Smith H.O."/>
            <person name="Gibbs R.A."/>
            <person name="Myers E.W."/>
            <person name="Rubin G.M."/>
            <person name="Venter J.C."/>
        </authorList>
    </citation>
    <scope>NUCLEOTIDE SEQUENCE [LARGE SCALE GENOMIC DNA]</scope>
    <source>
        <strain>Berkeley</strain>
    </source>
</reference>
<reference key="2">
    <citation type="journal article" date="2002" name="Genome Biol.">
        <title>Annotation of the Drosophila melanogaster euchromatic genome: a systematic review.</title>
        <authorList>
            <person name="Misra S."/>
            <person name="Crosby M.A."/>
            <person name="Mungall C.J."/>
            <person name="Matthews B.B."/>
            <person name="Campbell K.S."/>
            <person name="Hradecky P."/>
            <person name="Huang Y."/>
            <person name="Kaminker J.S."/>
            <person name="Millburn G.H."/>
            <person name="Prochnik S.E."/>
            <person name="Smith C.D."/>
            <person name="Tupy J.L."/>
            <person name="Whitfield E.J."/>
            <person name="Bayraktaroglu L."/>
            <person name="Berman B.P."/>
            <person name="Bettencourt B.R."/>
            <person name="Celniker S.E."/>
            <person name="de Grey A.D.N.J."/>
            <person name="Drysdale R.A."/>
            <person name="Harris N.L."/>
            <person name="Richter J."/>
            <person name="Russo S."/>
            <person name="Schroeder A.J."/>
            <person name="Shu S.Q."/>
            <person name="Stapleton M."/>
            <person name="Yamada C."/>
            <person name="Ashburner M."/>
            <person name="Gelbart W.M."/>
            <person name="Rubin G.M."/>
            <person name="Lewis S.E."/>
        </authorList>
    </citation>
    <scope>GENOME REANNOTATION</scope>
    <source>
        <strain>Berkeley</strain>
    </source>
</reference>
<reference key="3">
    <citation type="journal article" date="2002" name="Genome Biol.">
        <title>A Drosophila full-length cDNA resource.</title>
        <authorList>
            <person name="Stapleton M."/>
            <person name="Carlson J.W."/>
            <person name="Brokstein P."/>
            <person name="Yu C."/>
            <person name="Champe M."/>
            <person name="George R.A."/>
            <person name="Guarin H."/>
            <person name="Kronmiller B."/>
            <person name="Pacleb J.M."/>
            <person name="Park S."/>
            <person name="Wan K.H."/>
            <person name="Rubin G.M."/>
            <person name="Celniker S.E."/>
        </authorList>
    </citation>
    <scope>NUCLEOTIDE SEQUENCE [LARGE SCALE MRNA]</scope>
    <source>
        <strain>Berkeley</strain>
        <tissue>Head</tissue>
    </source>
</reference>
<reference key="4">
    <citation type="journal article" date="2005" name="J. Biol. Chem.">
        <title>The Drosophila ninaG oxidoreductase acts in visual pigment chromophore production.</title>
        <authorList>
            <person name="Sarfare S."/>
            <person name="Ahmad S.T."/>
            <person name="Joyce M.V."/>
            <person name="Boggess B."/>
            <person name="O'Tousa J.E."/>
        </authorList>
    </citation>
    <scope>FUNCTION</scope>
</reference>
<reference key="5">
    <citation type="journal article" date="2006" name="J. Biol. Chem.">
        <title>The role of Drosophila ninaG oxidoreductase in visual pigment chromophore biogenesis.</title>
        <authorList>
            <person name="Ahmad S.T."/>
            <person name="Joyce M.V."/>
            <person name="Boggess B."/>
            <person name="O'tousa J.E."/>
        </authorList>
    </citation>
    <scope>FUNCTION</scope>
    <scope>ENZYME ACTIVITY</scope>
</reference>
<organism>
    <name type="scientific">Drosophila melanogaster</name>
    <name type="common">Fruit fly</name>
    <dbReference type="NCBI Taxonomy" id="7227"/>
    <lineage>
        <taxon>Eukaryota</taxon>
        <taxon>Metazoa</taxon>
        <taxon>Ecdysozoa</taxon>
        <taxon>Arthropoda</taxon>
        <taxon>Hexapoda</taxon>
        <taxon>Insecta</taxon>
        <taxon>Pterygota</taxon>
        <taxon>Neoptera</taxon>
        <taxon>Endopterygota</taxon>
        <taxon>Diptera</taxon>
        <taxon>Brachycera</taxon>
        <taxon>Muscomorpha</taxon>
        <taxon>Ephydroidea</taxon>
        <taxon>Drosophilidae</taxon>
        <taxon>Drosophila</taxon>
        <taxon>Sophophora</taxon>
    </lineage>
</organism>
<feature type="signal peptide" evidence="3">
    <location>
        <begin position="1"/>
        <end position="26"/>
    </location>
</feature>
<feature type="chain" id="PRO_0000235295" description="Neither inactivation nor afterpotential protein G">
    <location>
        <begin position="27"/>
        <end position="581"/>
    </location>
</feature>
<feature type="active site" description="Proton acceptor" evidence="2">
    <location>
        <position position="516"/>
    </location>
</feature>
<feature type="binding site" evidence="1">
    <location>
        <begin position="48"/>
        <end position="77"/>
    </location>
    <ligand>
        <name>FAD</name>
        <dbReference type="ChEBI" id="CHEBI:57692"/>
    </ligand>
</feature>
<feature type="glycosylation site" description="N-linked (GlcNAc...) asparagine" evidence="3">
    <location>
        <position position="70"/>
    </location>
</feature>
<feature type="glycosylation site" description="N-linked (GlcNAc...) asparagine" evidence="3">
    <location>
        <position position="156"/>
    </location>
</feature>
<feature type="glycosylation site" description="N-linked (GlcNAc...) asparagine" evidence="3">
    <location>
        <position position="404"/>
    </location>
</feature>
<feature type="glycosylation site" description="N-linked (GlcNAc...) asparagine" evidence="3">
    <location>
        <position position="464"/>
    </location>
</feature>
<protein>
    <recommendedName>
        <fullName>Neither inactivation nor afterpotential protein G</fullName>
        <ecNumber>1.-.-.-</ecNumber>
    </recommendedName>
</protein>
<gene>
    <name type="primary">ninaG</name>
    <name type="ORF">CG6728</name>
</gene>
<proteinExistence type="evidence at transcript level"/>
<sequence>MGMKFQKILVLAGIVIGFLSIIVVLAGTLLKNSVPNVLAPVERHFAFDYVIVGGGTGGSTLTSLLAKNSNGSVLLIEAGGQFGLLSRIPLLTTFQQKGINDWSFLSVPQKHSSRGLIERRQCLPRGKGLGGSANLNYMLHFDGHGPDFDSWRDHHNLSDWSWAQMRSFMAAAKPKNPDMLEIPRRYSKLTEALEEAQAQFAYKDWIFRRSLYNIRNGLRHSVVQQFLNPVIHHSNLRLLPDALVKRIQLAPSPFLQATSILVGIKDEENREKEFSIELLMASGIGDVSALKKLGIPAQHSLPLVGHNLHDHFNLPLFVSMGVTGPTLNQNTLLNPMTLINYLSSGSGPLGNFGVLGNVVSYGGLGAPPYGITFFGAGAIDESALMSISNFKGPAFRALFPRYYNSSQEGFVVISSCLQPKSRGSVGLLNRHMRRNPLIDPNYLSSEEDVACTISAIRSAVELVNSTAFAALHPRIHWPRVQECSNFGPFERDFFDNRPSDQYLECLMRHVGLGSHHPGGTCALGSVVDSQLRLKGVSNVRVVDASVLPRPISGNPNSVVVAIALRAASWILKSELQAGDSK</sequence>
<name>NINAG_DROME</name>
<accession>Q9VGP2</accession>
<accession>Q8MSH3</accession>